<comment type="function">
    <text evidence="1">Regulates the transcription of the pyrimidine nucleotide (pyr) operon in response to exogenous pyrimidines.</text>
</comment>
<comment type="function">
    <text evidence="1">Also displays a weak uracil phosphoribosyltransferase activity which is not physiologically significant.</text>
</comment>
<comment type="catalytic activity">
    <reaction evidence="1">
        <text>UMP + diphosphate = 5-phospho-alpha-D-ribose 1-diphosphate + uracil</text>
        <dbReference type="Rhea" id="RHEA:13017"/>
        <dbReference type="ChEBI" id="CHEBI:17568"/>
        <dbReference type="ChEBI" id="CHEBI:33019"/>
        <dbReference type="ChEBI" id="CHEBI:57865"/>
        <dbReference type="ChEBI" id="CHEBI:58017"/>
        <dbReference type="EC" id="2.4.2.9"/>
    </reaction>
</comment>
<comment type="similarity">
    <text evidence="1">Belongs to the purine/pyrimidine phosphoribosyltransferase family. PyrR subfamily.</text>
</comment>
<keyword id="KW-0328">Glycosyltransferase</keyword>
<keyword id="KW-0804">Transcription</keyword>
<keyword id="KW-0805">Transcription regulation</keyword>
<keyword id="KW-0808">Transferase</keyword>
<name>PYRR_MYCBT</name>
<proteinExistence type="inferred from homology"/>
<reference key="1">
    <citation type="journal article" date="2009" name="Vaccine">
        <title>Whole genome sequence analysis of Mycobacterium bovis bacillus Calmette-Guerin (BCG) Tokyo 172: a comparative study of BCG vaccine substrains.</title>
        <authorList>
            <person name="Seki M."/>
            <person name="Honda I."/>
            <person name="Fujita I."/>
            <person name="Yano I."/>
            <person name="Yamamoto S."/>
            <person name="Koyama A."/>
        </authorList>
    </citation>
    <scope>NUCLEOTIDE SEQUENCE [LARGE SCALE GENOMIC DNA]</scope>
    <source>
        <strain>BCG / Tokyo 172 / ATCC 35737 / TMC 1019</strain>
    </source>
</reference>
<dbReference type="EC" id="2.4.2.9" evidence="1"/>
<dbReference type="EMBL" id="AP010918">
    <property type="protein sequence ID" value="BAH25703.1"/>
    <property type="molecule type" value="Genomic_DNA"/>
</dbReference>
<dbReference type="RefSeq" id="WP_003407196.1">
    <property type="nucleotide sequence ID" value="NZ_CP014566.1"/>
</dbReference>
<dbReference type="SMR" id="C1AN24"/>
<dbReference type="KEGG" id="mbt:JTY_1415"/>
<dbReference type="HOGENOM" id="CLU_094234_2_1_11"/>
<dbReference type="GO" id="GO:0004845">
    <property type="term" value="F:uracil phosphoribosyltransferase activity"/>
    <property type="evidence" value="ECO:0007669"/>
    <property type="project" value="UniProtKB-UniRule"/>
</dbReference>
<dbReference type="GO" id="GO:0006355">
    <property type="term" value="P:regulation of DNA-templated transcription"/>
    <property type="evidence" value="ECO:0007669"/>
    <property type="project" value="UniProtKB-UniRule"/>
</dbReference>
<dbReference type="CDD" id="cd06223">
    <property type="entry name" value="PRTases_typeI"/>
    <property type="match status" value="1"/>
</dbReference>
<dbReference type="FunFam" id="3.40.50.2020:FF:000020">
    <property type="entry name" value="Bifunctional protein PyrR"/>
    <property type="match status" value="1"/>
</dbReference>
<dbReference type="Gene3D" id="3.40.50.2020">
    <property type="match status" value="1"/>
</dbReference>
<dbReference type="HAMAP" id="MF_01219">
    <property type="entry name" value="PyrR"/>
    <property type="match status" value="1"/>
</dbReference>
<dbReference type="InterPro" id="IPR000836">
    <property type="entry name" value="PRibTrfase_dom"/>
</dbReference>
<dbReference type="InterPro" id="IPR029057">
    <property type="entry name" value="PRTase-like"/>
</dbReference>
<dbReference type="InterPro" id="IPR023050">
    <property type="entry name" value="PyrR"/>
</dbReference>
<dbReference type="InterPro" id="IPR050137">
    <property type="entry name" value="PyrR_bifunctional"/>
</dbReference>
<dbReference type="NCBIfam" id="NF003547">
    <property type="entry name" value="PRK05205.1-3"/>
    <property type="match status" value="1"/>
</dbReference>
<dbReference type="NCBIfam" id="NF003549">
    <property type="entry name" value="PRK05205.1-5"/>
    <property type="match status" value="1"/>
</dbReference>
<dbReference type="PANTHER" id="PTHR11608">
    <property type="entry name" value="BIFUNCTIONAL PROTEIN PYRR"/>
    <property type="match status" value="1"/>
</dbReference>
<dbReference type="PANTHER" id="PTHR11608:SF0">
    <property type="entry name" value="BIFUNCTIONAL PROTEIN PYRR"/>
    <property type="match status" value="1"/>
</dbReference>
<dbReference type="Pfam" id="PF00156">
    <property type="entry name" value="Pribosyltran"/>
    <property type="match status" value="1"/>
</dbReference>
<dbReference type="SUPFAM" id="SSF53271">
    <property type="entry name" value="PRTase-like"/>
    <property type="match status" value="1"/>
</dbReference>
<protein>
    <recommendedName>
        <fullName evidence="1">Bifunctional protein PyrR</fullName>
    </recommendedName>
    <domain>
        <recommendedName>
            <fullName evidence="1">Pyrimidine operon regulatory protein</fullName>
        </recommendedName>
    </domain>
    <domain>
        <recommendedName>
            <fullName evidence="1">Uracil phosphoribosyltransferase</fullName>
            <shortName evidence="1">UPRTase</shortName>
            <ecNumber evidence="1">2.4.2.9</ecNumber>
        </recommendedName>
    </domain>
</protein>
<accession>C1AN24</accession>
<evidence type="ECO:0000255" key="1">
    <source>
        <dbReference type="HAMAP-Rule" id="MF_01219"/>
    </source>
</evidence>
<sequence length="193" mass="20627">MGAAGDAAIGRESRELMSAADVGRTISRIAHQIIEKTALDDPVGPDAPRVVLLGIPTRGVTLANRLAGNITEYSGIHVGHGALDITLYRDDLMIKPPRPLASTSIPAGGIDDALVILVDDVLYSGRSVRSALDALRDVGRPRAVQLAVLVDRGHRELPLRADYVGKNVPTSRSESVHVRLREHDGRDGVVISR</sequence>
<feature type="chain" id="PRO_1000164851" description="Bifunctional protein PyrR">
    <location>
        <begin position="1"/>
        <end position="193"/>
    </location>
</feature>
<feature type="short sequence motif" description="PRPP-binding" evidence="1">
    <location>
        <begin position="115"/>
        <end position="127"/>
    </location>
</feature>
<organism>
    <name type="scientific">Mycobacterium bovis (strain BCG / Tokyo 172 / ATCC 35737 / TMC 1019)</name>
    <dbReference type="NCBI Taxonomy" id="561275"/>
    <lineage>
        <taxon>Bacteria</taxon>
        <taxon>Bacillati</taxon>
        <taxon>Actinomycetota</taxon>
        <taxon>Actinomycetes</taxon>
        <taxon>Mycobacteriales</taxon>
        <taxon>Mycobacteriaceae</taxon>
        <taxon>Mycobacterium</taxon>
        <taxon>Mycobacterium tuberculosis complex</taxon>
    </lineage>
</organism>
<gene>
    <name evidence="1" type="primary">pyrR</name>
    <name type="ordered locus">JTY_1415</name>
</gene>